<keyword id="KW-0456">Lyase</keyword>
<keyword id="KW-0460">Magnesium</keyword>
<keyword id="KW-0464">Manganese</keyword>
<keyword id="KW-0479">Metal-binding</keyword>
<keyword id="KW-0686">Riboflavin biosynthesis</keyword>
<proteinExistence type="inferred from homology"/>
<protein>
    <recommendedName>
        <fullName evidence="1">3,4-dihydroxy-2-butanone 4-phosphate synthase</fullName>
        <shortName evidence="1">DHBP synthase</shortName>
        <ecNumber evidence="1">4.1.99.12</ecNumber>
    </recommendedName>
</protein>
<sequence length="218" mass="23567">MNQSSLLAEFGDPITRVENALQALREGRGVLLLDDEDRENEGDIIYAVESLTTAQMALMIRECSGIVCLCLTEAQADRLALPPMVVNNNSANQTAFTVSIEAKHGVTTGVSAQDRVTTIKTAANPQAKPEDLARPGHVFPLRARAGGVLARRGHTEGTVDLMQMAGLQPAGVLCELTNPDGSMAKTPEIIEFGKLHNMPVLTIEDMVQYRIQFDLKLA</sequence>
<feature type="chain" id="PRO_1000193760" description="3,4-dihydroxy-2-butanone 4-phosphate synthase">
    <location>
        <begin position="1"/>
        <end position="218"/>
    </location>
</feature>
<feature type="binding site" evidence="1">
    <location>
        <begin position="38"/>
        <end position="39"/>
    </location>
    <ligand>
        <name>D-ribulose 5-phosphate</name>
        <dbReference type="ChEBI" id="CHEBI:58121"/>
    </ligand>
</feature>
<feature type="binding site" evidence="1">
    <location>
        <position position="39"/>
    </location>
    <ligand>
        <name>Mg(2+)</name>
        <dbReference type="ChEBI" id="CHEBI:18420"/>
        <label>1</label>
    </ligand>
</feature>
<feature type="binding site" evidence="1">
    <location>
        <position position="39"/>
    </location>
    <ligand>
        <name>Mg(2+)</name>
        <dbReference type="ChEBI" id="CHEBI:18420"/>
        <label>2</label>
    </ligand>
</feature>
<feature type="binding site" evidence="1">
    <location>
        <position position="43"/>
    </location>
    <ligand>
        <name>D-ribulose 5-phosphate</name>
        <dbReference type="ChEBI" id="CHEBI:58121"/>
    </ligand>
</feature>
<feature type="binding site" evidence="1">
    <location>
        <begin position="151"/>
        <end position="155"/>
    </location>
    <ligand>
        <name>D-ribulose 5-phosphate</name>
        <dbReference type="ChEBI" id="CHEBI:58121"/>
    </ligand>
</feature>
<feature type="binding site" evidence="1">
    <location>
        <position position="154"/>
    </location>
    <ligand>
        <name>Mg(2+)</name>
        <dbReference type="ChEBI" id="CHEBI:18420"/>
        <label>2</label>
    </ligand>
</feature>
<feature type="binding site" evidence="1">
    <location>
        <position position="175"/>
    </location>
    <ligand>
        <name>D-ribulose 5-phosphate</name>
        <dbReference type="ChEBI" id="CHEBI:58121"/>
    </ligand>
</feature>
<feature type="site" description="Essential for catalytic activity" evidence="1">
    <location>
        <position position="137"/>
    </location>
</feature>
<feature type="site" description="Essential for catalytic activity" evidence="1">
    <location>
        <position position="175"/>
    </location>
</feature>
<accession>C3LWX2</accession>
<evidence type="ECO:0000255" key="1">
    <source>
        <dbReference type="HAMAP-Rule" id="MF_00180"/>
    </source>
</evidence>
<organism>
    <name type="scientific">Vibrio cholerae serotype O1 (strain M66-2)</name>
    <dbReference type="NCBI Taxonomy" id="579112"/>
    <lineage>
        <taxon>Bacteria</taxon>
        <taxon>Pseudomonadati</taxon>
        <taxon>Pseudomonadota</taxon>
        <taxon>Gammaproteobacteria</taxon>
        <taxon>Vibrionales</taxon>
        <taxon>Vibrionaceae</taxon>
        <taxon>Vibrio</taxon>
    </lineage>
</organism>
<reference key="1">
    <citation type="journal article" date="2008" name="PLoS ONE">
        <title>A recalibrated molecular clock and independent origins for the cholera pandemic clones.</title>
        <authorList>
            <person name="Feng L."/>
            <person name="Reeves P.R."/>
            <person name="Lan R."/>
            <person name="Ren Y."/>
            <person name="Gao C."/>
            <person name="Zhou Z."/>
            <person name="Ren Y."/>
            <person name="Cheng J."/>
            <person name="Wang W."/>
            <person name="Wang J."/>
            <person name="Qian W."/>
            <person name="Li D."/>
            <person name="Wang L."/>
        </authorList>
    </citation>
    <scope>NUCLEOTIDE SEQUENCE [LARGE SCALE GENOMIC DNA]</scope>
    <source>
        <strain>M66-2</strain>
    </source>
</reference>
<gene>
    <name evidence="1" type="primary">ribB</name>
    <name type="ordered locus">VCM66_A1018</name>
</gene>
<comment type="function">
    <text evidence="1">Catalyzes the conversion of D-ribulose 5-phosphate to formate and 3,4-dihydroxy-2-butanone 4-phosphate.</text>
</comment>
<comment type="catalytic activity">
    <reaction evidence="1">
        <text>D-ribulose 5-phosphate = (2S)-2-hydroxy-3-oxobutyl phosphate + formate + H(+)</text>
        <dbReference type="Rhea" id="RHEA:18457"/>
        <dbReference type="ChEBI" id="CHEBI:15378"/>
        <dbReference type="ChEBI" id="CHEBI:15740"/>
        <dbReference type="ChEBI" id="CHEBI:58121"/>
        <dbReference type="ChEBI" id="CHEBI:58830"/>
        <dbReference type="EC" id="4.1.99.12"/>
    </reaction>
</comment>
<comment type="cofactor">
    <cofactor evidence="1">
        <name>Mg(2+)</name>
        <dbReference type="ChEBI" id="CHEBI:18420"/>
    </cofactor>
    <cofactor evidence="1">
        <name>Mn(2+)</name>
        <dbReference type="ChEBI" id="CHEBI:29035"/>
    </cofactor>
    <text evidence="1">Binds 2 divalent metal cations per subunit. Magnesium or manganese.</text>
</comment>
<comment type="pathway">
    <text evidence="1">Cofactor biosynthesis; riboflavin biosynthesis; 2-hydroxy-3-oxobutyl phosphate from D-ribulose 5-phosphate: step 1/1.</text>
</comment>
<comment type="subunit">
    <text evidence="1">Homodimer.</text>
</comment>
<comment type="similarity">
    <text evidence="1">Belongs to the DHBP synthase family.</text>
</comment>
<dbReference type="EC" id="4.1.99.12" evidence="1"/>
<dbReference type="EMBL" id="CP001234">
    <property type="protein sequence ID" value="ACP07977.1"/>
    <property type="molecule type" value="Genomic_DNA"/>
</dbReference>
<dbReference type="RefSeq" id="WP_001076646.1">
    <property type="nucleotide sequence ID" value="NC_012580.1"/>
</dbReference>
<dbReference type="SMR" id="C3LWX2"/>
<dbReference type="GeneID" id="89512076"/>
<dbReference type="KEGG" id="vcm:VCM66_A1018"/>
<dbReference type="HOGENOM" id="CLU_020273_3_0_6"/>
<dbReference type="UniPathway" id="UPA00275">
    <property type="reaction ID" value="UER00399"/>
</dbReference>
<dbReference type="Proteomes" id="UP000001217">
    <property type="component" value="Chromosome II"/>
</dbReference>
<dbReference type="GO" id="GO:0005829">
    <property type="term" value="C:cytosol"/>
    <property type="evidence" value="ECO:0007669"/>
    <property type="project" value="TreeGrafter"/>
</dbReference>
<dbReference type="GO" id="GO:0008686">
    <property type="term" value="F:3,4-dihydroxy-2-butanone-4-phosphate synthase activity"/>
    <property type="evidence" value="ECO:0007669"/>
    <property type="project" value="UniProtKB-UniRule"/>
</dbReference>
<dbReference type="GO" id="GO:0000287">
    <property type="term" value="F:magnesium ion binding"/>
    <property type="evidence" value="ECO:0007669"/>
    <property type="project" value="UniProtKB-UniRule"/>
</dbReference>
<dbReference type="GO" id="GO:0030145">
    <property type="term" value="F:manganese ion binding"/>
    <property type="evidence" value="ECO:0007669"/>
    <property type="project" value="UniProtKB-UniRule"/>
</dbReference>
<dbReference type="GO" id="GO:0009231">
    <property type="term" value="P:riboflavin biosynthetic process"/>
    <property type="evidence" value="ECO:0007669"/>
    <property type="project" value="UniProtKB-UniRule"/>
</dbReference>
<dbReference type="FunFam" id="3.90.870.10:FF:000002">
    <property type="entry name" value="3,4-dihydroxy-2-butanone 4-phosphate synthase"/>
    <property type="match status" value="1"/>
</dbReference>
<dbReference type="Gene3D" id="3.90.870.10">
    <property type="entry name" value="DHBP synthase"/>
    <property type="match status" value="1"/>
</dbReference>
<dbReference type="HAMAP" id="MF_00180">
    <property type="entry name" value="RibB"/>
    <property type="match status" value="1"/>
</dbReference>
<dbReference type="InterPro" id="IPR017945">
    <property type="entry name" value="DHBP_synth_RibB-like_a/b_dom"/>
</dbReference>
<dbReference type="InterPro" id="IPR000422">
    <property type="entry name" value="DHBP_synthase_RibB"/>
</dbReference>
<dbReference type="NCBIfam" id="TIGR00506">
    <property type="entry name" value="ribB"/>
    <property type="match status" value="1"/>
</dbReference>
<dbReference type="PANTHER" id="PTHR21327:SF38">
    <property type="entry name" value="3,4-DIHYDROXY-2-BUTANONE 4-PHOSPHATE SYNTHASE"/>
    <property type="match status" value="1"/>
</dbReference>
<dbReference type="PANTHER" id="PTHR21327">
    <property type="entry name" value="GTP CYCLOHYDROLASE II-RELATED"/>
    <property type="match status" value="1"/>
</dbReference>
<dbReference type="Pfam" id="PF00926">
    <property type="entry name" value="DHBP_synthase"/>
    <property type="match status" value="1"/>
</dbReference>
<dbReference type="SUPFAM" id="SSF55821">
    <property type="entry name" value="YrdC/RibB"/>
    <property type="match status" value="1"/>
</dbReference>
<name>RIBB_VIBCM</name>